<protein>
    <recommendedName>
        <fullName>Uncharacterized glycosyltransferase MA_0453</fullName>
        <ecNumber>2.4.-.-</ecNumber>
    </recommendedName>
</protein>
<keyword id="KW-0328">Glycosyltransferase</keyword>
<keyword id="KW-1185">Reference proteome</keyword>
<keyword id="KW-0808">Transferase</keyword>
<accession>Q8TTI0</accession>
<reference key="1">
    <citation type="journal article" date="2002" name="Genome Res.">
        <title>The genome of Methanosarcina acetivorans reveals extensive metabolic and physiological diversity.</title>
        <authorList>
            <person name="Galagan J.E."/>
            <person name="Nusbaum C."/>
            <person name="Roy A."/>
            <person name="Endrizzi M.G."/>
            <person name="Macdonald P."/>
            <person name="FitzHugh W."/>
            <person name="Calvo S."/>
            <person name="Engels R."/>
            <person name="Smirnov S."/>
            <person name="Atnoor D."/>
            <person name="Brown A."/>
            <person name="Allen N."/>
            <person name="Naylor J."/>
            <person name="Stange-Thomann N."/>
            <person name="DeArellano K."/>
            <person name="Johnson R."/>
            <person name="Linton L."/>
            <person name="McEwan P."/>
            <person name="McKernan K."/>
            <person name="Talamas J."/>
            <person name="Tirrell A."/>
            <person name="Ye W."/>
            <person name="Zimmer A."/>
            <person name="Barber R.D."/>
            <person name="Cann I."/>
            <person name="Graham D.E."/>
            <person name="Grahame D.A."/>
            <person name="Guss A.M."/>
            <person name="Hedderich R."/>
            <person name="Ingram-Smith C."/>
            <person name="Kuettner H.C."/>
            <person name="Krzycki J.A."/>
            <person name="Leigh J.A."/>
            <person name="Li W."/>
            <person name="Liu J."/>
            <person name="Mukhopadhyay B."/>
            <person name="Reeve J.N."/>
            <person name="Smith K."/>
            <person name="Springer T.A."/>
            <person name="Umayam L.A."/>
            <person name="White O."/>
            <person name="White R.H."/>
            <person name="de Macario E.C."/>
            <person name="Ferry J.G."/>
            <person name="Jarrell K.F."/>
            <person name="Jing H."/>
            <person name="Macario A.J.L."/>
            <person name="Paulsen I.T."/>
            <person name="Pritchett M."/>
            <person name="Sowers K.R."/>
            <person name="Swanson R.V."/>
            <person name="Zinder S.H."/>
            <person name="Lander E."/>
            <person name="Metcalf W.W."/>
            <person name="Birren B."/>
        </authorList>
    </citation>
    <scope>NUCLEOTIDE SEQUENCE [LARGE SCALE GENOMIC DNA]</scope>
    <source>
        <strain>ATCC 35395 / DSM 2834 / JCM 12185 / C2A</strain>
    </source>
</reference>
<sequence>MKILLFICGEGLGHTSRCLALGKEFLAAGHEVSFGAYGYSRELVRKTGYSAWEIQPEIRLIGETGIFDIGKSIKETLRNLSPVGFRKLLKLIEVLEPDVVLSDGYYSGILAARSRKVPVYFIGHQFNMEEFFQKKGPLLAVAGKLVRRFYNYIFSSVDGIMVPDYPLPYSVNRRNFTIPRALNPNIFFSGPLIRSRYREVEAKAFRHPNVLSTIGAFGYRAAIFRKVLEAAKLDPDIHYTFIAGPGIVPEQFPEIPENVEFTGFTDNPFPYYRGSDLVITAGGHGTIMESLAFGLPVLSFPDEKHTEQENNATVLEDAGYGKRMSYLTRPEVILACIREVLEDENYRRKTRRLMELAEVLDGPAAVRKLLEEKFGERSAGKENSKEET</sequence>
<feature type="chain" id="PRO_0000215618" description="Uncharacterized glycosyltransferase MA_0453">
    <location>
        <begin position="1"/>
        <end position="388"/>
    </location>
</feature>
<name>Y453_METAC</name>
<proteinExistence type="inferred from homology"/>
<dbReference type="EC" id="2.4.-.-"/>
<dbReference type="EMBL" id="AE010299">
    <property type="protein sequence ID" value="AAM03899.1"/>
    <property type="status" value="ALT_INIT"/>
    <property type="molecule type" value="Genomic_DNA"/>
</dbReference>
<dbReference type="RefSeq" id="WP_048066094.1">
    <property type="nucleotide sequence ID" value="NC_003552.1"/>
</dbReference>
<dbReference type="SMR" id="Q8TTI0"/>
<dbReference type="STRING" id="188937.MA_0453"/>
<dbReference type="CAZy" id="GT1">
    <property type="family name" value="Glycosyltransferase Family 1"/>
</dbReference>
<dbReference type="EnsemblBacteria" id="AAM03899">
    <property type="protein sequence ID" value="AAM03899"/>
    <property type="gene ID" value="MA_0453"/>
</dbReference>
<dbReference type="GeneID" id="1472345"/>
<dbReference type="KEGG" id="mac:MA_0453"/>
<dbReference type="HOGENOM" id="CLU_060247_0_0_2"/>
<dbReference type="InParanoid" id="Q8TTI0"/>
<dbReference type="OrthoDB" id="46222at2157"/>
<dbReference type="PhylomeDB" id="Q8TTI0"/>
<dbReference type="Proteomes" id="UP000002487">
    <property type="component" value="Chromosome"/>
</dbReference>
<dbReference type="GO" id="GO:0016757">
    <property type="term" value="F:glycosyltransferase activity"/>
    <property type="evidence" value="ECO:0000318"/>
    <property type="project" value="GO_Central"/>
</dbReference>
<dbReference type="GO" id="GO:0016758">
    <property type="term" value="F:hexosyltransferase activity"/>
    <property type="evidence" value="ECO:0007669"/>
    <property type="project" value="InterPro"/>
</dbReference>
<dbReference type="CDD" id="cd03785">
    <property type="entry name" value="GT28_MurG"/>
    <property type="match status" value="1"/>
</dbReference>
<dbReference type="Gene3D" id="3.40.50.2000">
    <property type="entry name" value="Glycogen Phosphorylase B"/>
    <property type="match status" value="2"/>
</dbReference>
<dbReference type="InterPro" id="IPR007235">
    <property type="entry name" value="Glyco_trans_28_C"/>
</dbReference>
<dbReference type="PANTHER" id="PTHR21015:SF22">
    <property type="entry name" value="GLYCOSYLTRANSFERASE"/>
    <property type="match status" value="1"/>
</dbReference>
<dbReference type="PANTHER" id="PTHR21015">
    <property type="entry name" value="UDP-N-ACETYLGLUCOSAMINE--N-ACETYLMURAMYL-(PENTAPEPTIDE) PYROPHOSPHORYL-UNDECAPRENOL N-ACETYLGLUCOSAMINE TRANSFERASE 1"/>
    <property type="match status" value="1"/>
</dbReference>
<dbReference type="Pfam" id="PF04101">
    <property type="entry name" value="Glyco_tran_28_C"/>
    <property type="match status" value="1"/>
</dbReference>
<dbReference type="Pfam" id="PF13528">
    <property type="entry name" value="Glyco_trans_1_3"/>
    <property type="match status" value="1"/>
</dbReference>
<dbReference type="SUPFAM" id="SSF53756">
    <property type="entry name" value="UDP-Glycosyltransferase/glycogen phosphorylase"/>
    <property type="match status" value="1"/>
</dbReference>
<gene>
    <name type="ordered locus">MA_0453</name>
</gene>
<organism>
    <name type="scientific">Methanosarcina acetivorans (strain ATCC 35395 / DSM 2834 / JCM 12185 / C2A)</name>
    <dbReference type="NCBI Taxonomy" id="188937"/>
    <lineage>
        <taxon>Archaea</taxon>
        <taxon>Methanobacteriati</taxon>
        <taxon>Methanobacteriota</taxon>
        <taxon>Stenosarchaea group</taxon>
        <taxon>Methanomicrobia</taxon>
        <taxon>Methanosarcinales</taxon>
        <taxon>Methanosarcinaceae</taxon>
        <taxon>Methanosarcina</taxon>
    </lineage>
</organism>
<comment type="similarity">
    <text evidence="1">Belongs to the glycosyltransferase 28 family.</text>
</comment>
<comment type="sequence caution" evidence="1">
    <conflict type="erroneous initiation">
        <sequence resource="EMBL-CDS" id="AAM03899"/>
    </conflict>
</comment>
<evidence type="ECO:0000305" key="1"/>